<feature type="chain" id="PRO_0000254477" description="ATP synthase subunit beta, chloroplastic">
    <location>
        <begin position="1"/>
        <end position="498"/>
    </location>
</feature>
<feature type="binding site" evidence="1">
    <location>
        <begin position="172"/>
        <end position="179"/>
    </location>
    <ligand>
        <name>ATP</name>
        <dbReference type="ChEBI" id="CHEBI:30616"/>
    </ligand>
</feature>
<protein>
    <recommendedName>
        <fullName evidence="1">ATP synthase subunit beta, chloroplastic</fullName>
        <ecNumber evidence="1">7.1.2.2</ecNumber>
    </recommendedName>
    <alternativeName>
        <fullName evidence="1">ATP synthase F1 sector subunit beta</fullName>
    </alternativeName>
    <alternativeName>
        <fullName evidence="1">F-ATPase subunit beta</fullName>
    </alternativeName>
</protein>
<evidence type="ECO:0000255" key="1">
    <source>
        <dbReference type="HAMAP-Rule" id="MF_01347"/>
    </source>
</evidence>
<accession>Q9MRI8</accession>
<gene>
    <name evidence="1" type="primary">atpB</name>
</gene>
<proteinExistence type="inferred from homology"/>
<dbReference type="EC" id="7.1.2.2" evidence="1"/>
<dbReference type="EMBL" id="AJ235478">
    <property type="protein sequence ID" value="CAB89711.1"/>
    <property type="molecule type" value="Genomic_DNA"/>
</dbReference>
<dbReference type="SMR" id="Q9MRI8"/>
<dbReference type="GO" id="GO:0009535">
    <property type="term" value="C:chloroplast thylakoid membrane"/>
    <property type="evidence" value="ECO:0007669"/>
    <property type="project" value="UniProtKB-SubCell"/>
</dbReference>
<dbReference type="GO" id="GO:0005739">
    <property type="term" value="C:mitochondrion"/>
    <property type="evidence" value="ECO:0007669"/>
    <property type="project" value="GOC"/>
</dbReference>
<dbReference type="GO" id="GO:0045259">
    <property type="term" value="C:proton-transporting ATP synthase complex"/>
    <property type="evidence" value="ECO:0007669"/>
    <property type="project" value="UniProtKB-KW"/>
</dbReference>
<dbReference type="GO" id="GO:0005524">
    <property type="term" value="F:ATP binding"/>
    <property type="evidence" value="ECO:0007669"/>
    <property type="project" value="UniProtKB-UniRule"/>
</dbReference>
<dbReference type="GO" id="GO:0016887">
    <property type="term" value="F:ATP hydrolysis activity"/>
    <property type="evidence" value="ECO:0007669"/>
    <property type="project" value="InterPro"/>
</dbReference>
<dbReference type="GO" id="GO:0046933">
    <property type="term" value="F:proton-transporting ATP synthase activity, rotational mechanism"/>
    <property type="evidence" value="ECO:0007669"/>
    <property type="project" value="UniProtKB-UniRule"/>
</dbReference>
<dbReference type="GO" id="GO:0042776">
    <property type="term" value="P:proton motive force-driven mitochondrial ATP synthesis"/>
    <property type="evidence" value="ECO:0007669"/>
    <property type="project" value="TreeGrafter"/>
</dbReference>
<dbReference type="CDD" id="cd18110">
    <property type="entry name" value="ATP-synt_F1_beta_C"/>
    <property type="match status" value="1"/>
</dbReference>
<dbReference type="CDD" id="cd18115">
    <property type="entry name" value="ATP-synt_F1_beta_N"/>
    <property type="match status" value="1"/>
</dbReference>
<dbReference type="CDD" id="cd01133">
    <property type="entry name" value="F1-ATPase_beta_CD"/>
    <property type="match status" value="1"/>
</dbReference>
<dbReference type="FunFam" id="1.10.1140.10:FF:000001">
    <property type="entry name" value="ATP synthase subunit beta"/>
    <property type="match status" value="1"/>
</dbReference>
<dbReference type="FunFam" id="3.40.50.12240:FF:000006">
    <property type="entry name" value="ATP synthase subunit beta"/>
    <property type="match status" value="1"/>
</dbReference>
<dbReference type="FunFam" id="3.40.50.300:FF:000004">
    <property type="entry name" value="ATP synthase subunit beta"/>
    <property type="match status" value="1"/>
</dbReference>
<dbReference type="FunFam" id="2.40.10.170:FF:000002">
    <property type="entry name" value="ATP synthase subunit beta, chloroplastic"/>
    <property type="match status" value="1"/>
</dbReference>
<dbReference type="Gene3D" id="2.40.10.170">
    <property type="match status" value="1"/>
</dbReference>
<dbReference type="Gene3D" id="1.10.1140.10">
    <property type="entry name" value="Bovine Mitochondrial F1-atpase, Atp Synthase Beta Chain, Chain D, domain 3"/>
    <property type="match status" value="1"/>
</dbReference>
<dbReference type="Gene3D" id="3.40.50.300">
    <property type="entry name" value="P-loop containing nucleotide triphosphate hydrolases"/>
    <property type="match status" value="1"/>
</dbReference>
<dbReference type="HAMAP" id="MF_01347">
    <property type="entry name" value="ATP_synth_beta_bact"/>
    <property type="match status" value="1"/>
</dbReference>
<dbReference type="InterPro" id="IPR003593">
    <property type="entry name" value="AAA+_ATPase"/>
</dbReference>
<dbReference type="InterPro" id="IPR055190">
    <property type="entry name" value="ATP-synt_VA_C"/>
</dbReference>
<dbReference type="InterPro" id="IPR005722">
    <property type="entry name" value="ATP_synth_F1_bsu"/>
</dbReference>
<dbReference type="InterPro" id="IPR020003">
    <property type="entry name" value="ATPase_a/bsu_AS"/>
</dbReference>
<dbReference type="InterPro" id="IPR050053">
    <property type="entry name" value="ATPase_alpha/beta_chains"/>
</dbReference>
<dbReference type="InterPro" id="IPR004100">
    <property type="entry name" value="ATPase_F1/V1/A1_a/bsu_N"/>
</dbReference>
<dbReference type="InterPro" id="IPR036121">
    <property type="entry name" value="ATPase_F1/V1/A1_a/bsu_N_sf"/>
</dbReference>
<dbReference type="InterPro" id="IPR000194">
    <property type="entry name" value="ATPase_F1/V1/A1_a/bsu_nucl-bd"/>
</dbReference>
<dbReference type="InterPro" id="IPR024034">
    <property type="entry name" value="ATPase_F1/V1_b/a_C"/>
</dbReference>
<dbReference type="InterPro" id="IPR027417">
    <property type="entry name" value="P-loop_NTPase"/>
</dbReference>
<dbReference type="NCBIfam" id="TIGR01039">
    <property type="entry name" value="atpD"/>
    <property type="match status" value="1"/>
</dbReference>
<dbReference type="PANTHER" id="PTHR15184">
    <property type="entry name" value="ATP SYNTHASE"/>
    <property type="match status" value="1"/>
</dbReference>
<dbReference type="PANTHER" id="PTHR15184:SF71">
    <property type="entry name" value="ATP SYNTHASE SUBUNIT BETA, MITOCHONDRIAL"/>
    <property type="match status" value="1"/>
</dbReference>
<dbReference type="Pfam" id="PF00006">
    <property type="entry name" value="ATP-synt_ab"/>
    <property type="match status" value="1"/>
</dbReference>
<dbReference type="Pfam" id="PF02874">
    <property type="entry name" value="ATP-synt_ab_N"/>
    <property type="match status" value="1"/>
</dbReference>
<dbReference type="Pfam" id="PF22919">
    <property type="entry name" value="ATP-synt_VA_C"/>
    <property type="match status" value="1"/>
</dbReference>
<dbReference type="SMART" id="SM00382">
    <property type="entry name" value="AAA"/>
    <property type="match status" value="1"/>
</dbReference>
<dbReference type="SUPFAM" id="SSF47917">
    <property type="entry name" value="C-terminal domain of alpha and beta subunits of F1 ATP synthase"/>
    <property type="match status" value="1"/>
</dbReference>
<dbReference type="SUPFAM" id="SSF50615">
    <property type="entry name" value="N-terminal domain of alpha and beta subunits of F1 ATP synthase"/>
    <property type="match status" value="1"/>
</dbReference>
<dbReference type="SUPFAM" id="SSF52540">
    <property type="entry name" value="P-loop containing nucleoside triphosphate hydrolases"/>
    <property type="match status" value="1"/>
</dbReference>
<dbReference type="PROSITE" id="PS00152">
    <property type="entry name" value="ATPASE_ALPHA_BETA"/>
    <property type="match status" value="1"/>
</dbReference>
<geneLocation type="chloroplast"/>
<keyword id="KW-0066">ATP synthesis</keyword>
<keyword id="KW-0067">ATP-binding</keyword>
<keyword id="KW-0139">CF(1)</keyword>
<keyword id="KW-0150">Chloroplast</keyword>
<keyword id="KW-0375">Hydrogen ion transport</keyword>
<keyword id="KW-0406">Ion transport</keyword>
<keyword id="KW-0472">Membrane</keyword>
<keyword id="KW-0547">Nucleotide-binding</keyword>
<keyword id="KW-0934">Plastid</keyword>
<keyword id="KW-0793">Thylakoid</keyword>
<keyword id="KW-1278">Translocase</keyword>
<keyword id="KW-0813">Transport</keyword>
<sequence length="498" mass="53645">MRINPTTSGPGVSTLGRKNLGRIAQIIGPVLDVAFPPGKMPNIYNALVVKGRDTVGQQINVTCEVQQLLGNNRVRAVAMSATDGLMRGMEVIDTGAPLSVPVGGATLGRIFNVLGEPVDNLGPVDTRTTSPIHRSAPAFIQLDTKLSIFETGIKVVDLLAPYRRGGKIGLFGGAGVGKTVLIMELINNIAKAHGGVSVFGGVGERTREGNDLYMEMKESGVINEQNIAESKVALVYGQMNEPPGARMRVGLTALTMAEYFRDVNEQDVLLFIDNIFRFVQAGSEVSALLGRMPSAVGYQPTLSTEMGSLQERITSTKEGSITSIQAVYVPADDLTDPAPATTFAHLDATTVLSRGLAAKGIYPAVDPLDSTSTMLQPRIVGEEHYETAQRVKQTSQRYKELQDIIAILGLDELSEEDRLTVARARKIERFLSQPFFVAEVFTGSPGKYVGLAETIRGFQLILSGELDGLPEQAFYLVGNIDEATAKAMNFEVESKLKK</sequence>
<reference key="1">
    <citation type="journal article" date="2000" name="Syst. Biol.">
        <title>Phylogenetics of flowering plants based upon a combined analysis of plastid atpB and rbcL gene sequences.</title>
        <authorList>
            <person name="Savolainen V."/>
            <person name="Chase M.W."/>
            <person name="Morton C.M."/>
            <person name="Hoot S.B."/>
            <person name="Soltis D.E."/>
            <person name="Bayer C."/>
            <person name="Fay M.F."/>
            <person name="de Bruijn A."/>
            <person name="Sullivan S."/>
            <person name="Qiu Y.-L."/>
        </authorList>
    </citation>
    <scope>NUCLEOTIDE SEQUENCE [GENOMIC DNA]</scope>
</reference>
<organism>
    <name type="scientific">Galbulimima belgraveana</name>
    <name type="common">Northern pigeonberry ash</name>
    <name type="synonym">Eupomatia belgraveana</name>
    <dbReference type="NCBI Taxonomy" id="13535"/>
    <lineage>
        <taxon>Eukaryota</taxon>
        <taxon>Viridiplantae</taxon>
        <taxon>Streptophyta</taxon>
        <taxon>Embryophyta</taxon>
        <taxon>Tracheophyta</taxon>
        <taxon>Spermatophyta</taxon>
        <taxon>Magnoliopsida</taxon>
        <taxon>Magnoliidae</taxon>
        <taxon>Magnoliales</taxon>
        <taxon>Himantandraceae</taxon>
        <taxon>Galbulimima</taxon>
    </lineage>
</organism>
<comment type="function">
    <text evidence="1">Produces ATP from ADP in the presence of a proton gradient across the membrane. The catalytic sites are hosted primarily by the beta subunits.</text>
</comment>
<comment type="catalytic activity">
    <reaction evidence="1">
        <text>ATP + H2O + 4 H(+)(in) = ADP + phosphate + 5 H(+)(out)</text>
        <dbReference type="Rhea" id="RHEA:57720"/>
        <dbReference type="ChEBI" id="CHEBI:15377"/>
        <dbReference type="ChEBI" id="CHEBI:15378"/>
        <dbReference type="ChEBI" id="CHEBI:30616"/>
        <dbReference type="ChEBI" id="CHEBI:43474"/>
        <dbReference type="ChEBI" id="CHEBI:456216"/>
        <dbReference type="EC" id="7.1.2.2"/>
    </reaction>
</comment>
<comment type="subunit">
    <text evidence="1">F-type ATPases have 2 components, CF(1) - the catalytic core - and CF(0) - the membrane proton channel. CF(1) has five subunits: alpha(3), beta(3), gamma(1), delta(1), epsilon(1). CF(0) has four main subunits: a(1), b(1), b'(1) and c(9-12).</text>
</comment>
<comment type="subcellular location">
    <subcellularLocation>
        <location evidence="1">Plastid</location>
        <location evidence="1">Chloroplast thylakoid membrane</location>
        <topology evidence="1">Peripheral membrane protein</topology>
    </subcellularLocation>
</comment>
<comment type="similarity">
    <text evidence="1">Belongs to the ATPase alpha/beta chains family.</text>
</comment>
<name>ATPB_GALBE</name>